<evidence type="ECO:0000255" key="1">
    <source>
        <dbReference type="HAMAP-Rule" id="MF_00169"/>
    </source>
</evidence>
<gene>
    <name evidence="1" type="primary">aroQ</name>
    <name type="ordered locus">BA_4423</name>
    <name type="ordered locus">GBAA_4423</name>
    <name type="ordered locus">BAS4103</name>
</gene>
<dbReference type="EC" id="4.2.1.10" evidence="1"/>
<dbReference type="EMBL" id="AE016879">
    <property type="protein sequence ID" value="AAP28137.1"/>
    <property type="molecule type" value="Genomic_DNA"/>
</dbReference>
<dbReference type="EMBL" id="AE017334">
    <property type="protein sequence ID" value="AAT33540.1"/>
    <property type="molecule type" value="Genomic_DNA"/>
</dbReference>
<dbReference type="EMBL" id="AE017225">
    <property type="protein sequence ID" value="AAT56404.1"/>
    <property type="molecule type" value="Genomic_DNA"/>
</dbReference>
<dbReference type="RefSeq" id="NP_846651.1">
    <property type="nucleotide sequence ID" value="NC_003997.3"/>
</dbReference>
<dbReference type="RefSeq" id="WP_000757082.1">
    <property type="nucleotide sequence ID" value="NZ_WXXJ01000027.1"/>
</dbReference>
<dbReference type="RefSeq" id="YP_030353.1">
    <property type="nucleotide sequence ID" value="NC_005945.1"/>
</dbReference>
<dbReference type="SMR" id="Q81M32"/>
<dbReference type="STRING" id="261594.GBAA_4423"/>
<dbReference type="DNASU" id="1087785"/>
<dbReference type="GeneID" id="45024083"/>
<dbReference type="KEGG" id="ban:BA_4423"/>
<dbReference type="KEGG" id="bar:GBAA_4423"/>
<dbReference type="KEGG" id="bat:BAS4103"/>
<dbReference type="PATRIC" id="fig|198094.11.peg.4391"/>
<dbReference type="eggNOG" id="COG0757">
    <property type="taxonomic scope" value="Bacteria"/>
</dbReference>
<dbReference type="HOGENOM" id="CLU_090968_3_0_9"/>
<dbReference type="OMA" id="AYTHYSY"/>
<dbReference type="OrthoDB" id="9790793at2"/>
<dbReference type="UniPathway" id="UPA00053">
    <property type="reaction ID" value="UER00086"/>
</dbReference>
<dbReference type="Proteomes" id="UP000000427">
    <property type="component" value="Chromosome"/>
</dbReference>
<dbReference type="Proteomes" id="UP000000594">
    <property type="component" value="Chromosome"/>
</dbReference>
<dbReference type="GO" id="GO:0003855">
    <property type="term" value="F:3-dehydroquinate dehydratase activity"/>
    <property type="evidence" value="ECO:0007669"/>
    <property type="project" value="UniProtKB-UniRule"/>
</dbReference>
<dbReference type="GO" id="GO:0008652">
    <property type="term" value="P:amino acid biosynthetic process"/>
    <property type="evidence" value="ECO:0007669"/>
    <property type="project" value="UniProtKB-KW"/>
</dbReference>
<dbReference type="GO" id="GO:0009073">
    <property type="term" value="P:aromatic amino acid family biosynthetic process"/>
    <property type="evidence" value="ECO:0007669"/>
    <property type="project" value="UniProtKB-KW"/>
</dbReference>
<dbReference type="GO" id="GO:0009423">
    <property type="term" value="P:chorismate biosynthetic process"/>
    <property type="evidence" value="ECO:0007669"/>
    <property type="project" value="UniProtKB-UniRule"/>
</dbReference>
<dbReference type="GO" id="GO:0019631">
    <property type="term" value="P:quinate catabolic process"/>
    <property type="evidence" value="ECO:0007669"/>
    <property type="project" value="TreeGrafter"/>
</dbReference>
<dbReference type="CDD" id="cd00466">
    <property type="entry name" value="DHQase_II"/>
    <property type="match status" value="1"/>
</dbReference>
<dbReference type="Gene3D" id="3.40.50.9100">
    <property type="entry name" value="Dehydroquinase, class II"/>
    <property type="match status" value="1"/>
</dbReference>
<dbReference type="HAMAP" id="MF_00169">
    <property type="entry name" value="AroQ"/>
    <property type="match status" value="1"/>
</dbReference>
<dbReference type="InterPro" id="IPR001874">
    <property type="entry name" value="DHquinase_II"/>
</dbReference>
<dbReference type="InterPro" id="IPR018509">
    <property type="entry name" value="DHquinase_II_CS"/>
</dbReference>
<dbReference type="InterPro" id="IPR036441">
    <property type="entry name" value="DHquinase_II_sf"/>
</dbReference>
<dbReference type="NCBIfam" id="TIGR01088">
    <property type="entry name" value="aroQ"/>
    <property type="match status" value="1"/>
</dbReference>
<dbReference type="NCBIfam" id="NF003805">
    <property type="entry name" value="PRK05395.1-2"/>
    <property type="match status" value="1"/>
</dbReference>
<dbReference type="NCBIfam" id="NF003806">
    <property type="entry name" value="PRK05395.1-3"/>
    <property type="match status" value="1"/>
</dbReference>
<dbReference type="NCBIfam" id="NF003807">
    <property type="entry name" value="PRK05395.1-4"/>
    <property type="match status" value="1"/>
</dbReference>
<dbReference type="PANTHER" id="PTHR21272">
    <property type="entry name" value="CATABOLIC 3-DEHYDROQUINASE"/>
    <property type="match status" value="1"/>
</dbReference>
<dbReference type="PANTHER" id="PTHR21272:SF3">
    <property type="entry name" value="CATABOLIC 3-DEHYDROQUINASE"/>
    <property type="match status" value="1"/>
</dbReference>
<dbReference type="Pfam" id="PF01220">
    <property type="entry name" value="DHquinase_II"/>
    <property type="match status" value="1"/>
</dbReference>
<dbReference type="PIRSF" id="PIRSF001399">
    <property type="entry name" value="DHquinase_II"/>
    <property type="match status" value="1"/>
</dbReference>
<dbReference type="SUPFAM" id="SSF52304">
    <property type="entry name" value="Type II 3-dehydroquinate dehydratase"/>
    <property type="match status" value="1"/>
</dbReference>
<dbReference type="PROSITE" id="PS01029">
    <property type="entry name" value="DEHYDROQUINASE_II"/>
    <property type="match status" value="1"/>
</dbReference>
<sequence>MKKVLLVNGPNLNRLGVREVNVYGKGTLATLEADMKQEAEAMGVELECFQSNHEGAIIDRIHEAEDIYEGIILNPGAFTHYSYAIRDAIASISIPVIEVHISNIHQRESFRHESVTAAVCAGQIVGFGFYGYKLALFALMEKLREA</sequence>
<accession>Q81M32</accession>
<accession>Q6HTI5</accession>
<accession>Q6KMS6</accession>
<protein>
    <recommendedName>
        <fullName evidence="1">3-dehydroquinate dehydratase</fullName>
        <shortName evidence="1">3-dehydroquinase</shortName>
        <ecNumber evidence="1">4.2.1.10</ecNumber>
    </recommendedName>
    <alternativeName>
        <fullName evidence="1">Type II DHQase</fullName>
    </alternativeName>
</protein>
<keyword id="KW-0028">Amino-acid biosynthesis</keyword>
<keyword id="KW-0057">Aromatic amino acid biosynthesis</keyword>
<keyword id="KW-0456">Lyase</keyword>
<keyword id="KW-1185">Reference proteome</keyword>
<organism>
    <name type="scientific">Bacillus anthracis</name>
    <dbReference type="NCBI Taxonomy" id="1392"/>
    <lineage>
        <taxon>Bacteria</taxon>
        <taxon>Bacillati</taxon>
        <taxon>Bacillota</taxon>
        <taxon>Bacilli</taxon>
        <taxon>Bacillales</taxon>
        <taxon>Bacillaceae</taxon>
        <taxon>Bacillus</taxon>
        <taxon>Bacillus cereus group</taxon>
    </lineage>
</organism>
<reference key="1">
    <citation type="journal article" date="2003" name="Nature">
        <title>The genome sequence of Bacillus anthracis Ames and comparison to closely related bacteria.</title>
        <authorList>
            <person name="Read T.D."/>
            <person name="Peterson S.N."/>
            <person name="Tourasse N.J."/>
            <person name="Baillie L.W."/>
            <person name="Paulsen I.T."/>
            <person name="Nelson K.E."/>
            <person name="Tettelin H."/>
            <person name="Fouts D.E."/>
            <person name="Eisen J.A."/>
            <person name="Gill S.R."/>
            <person name="Holtzapple E.K."/>
            <person name="Okstad O.A."/>
            <person name="Helgason E."/>
            <person name="Rilstone J."/>
            <person name="Wu M."/>
            <person name="Kolonay J.F."/>
            <person name="Beanan M.J."/>
            <person name="Dodson R.J."/>
            <person name="Brinkac L.M."/>
            <person name="Gwinn M.L."/>
            <person name="DeBoy R.T."/>
            <person name="Madpu R."/>
            <person name="Daugherty S.C."/>
            <person name="Durkin A.S."/>
            <person name="Haft D.H."/>
            <person name="Nelson W.C."/>
            <person name="Peterson J.D."/>
            <person name="Pop M."/>
            <person name="Khouri H.M."/>
            <person name="Radune D."/>
            <person name="Benton J.L."/>
            <person name="Mahamoud Y."/>
            <person name="Jiang L."/>
            <person name="Hance I.R."/>
            <person name="Weidman J.F."/>
            <person name="Berry K.J."/>
            <person name="Plaut R.D."/>
            <person name="Wolf A.M."/>
            <person name="Watkins K.L."/>
            <person name="Nierman W.C."/>
            <person name="Hazen A."/>
            <person name="Cline R.T."/>
            <person name="Redmond C."/>
            <person name="Thwaite J.E."/>
            <person name="White O."/>
            <person name="Salzberg S.L."/>
            <person name="Thomason B."/>
            <person name="Friedlander A.M."/>
            <person name="Koehler T.M."/>
            <person name="Hanna P.C."/>
            <person name="Kolstoe A.-B."/>
            <person name="Fraser C.M."/>
        </authorList>
    </citation>
    <scope>NUCLEOTIDE SEQUENCE [LARGE SCALE GENOMIC DNA]</scope>
    <source>
        <strain>Ames / isolate Porton</strain>
    </source>
</reference>
<reference key="2">
    <citation type="journal article" date="2009" name="J. Bacteriol.">
        <title>The complete genome sequence of Bacillus anthracis Ames 'Ancestor'.</title>
        <authorList>
            <person name="Ravel J."/>
            <person name="Jiang L."/>
            <person name="Stanley S.T."/>
            <person name="Wilson M.R."/>
            <person name="Decker R.S."/>
            <person name="Read T.D."/>
            <person name="Worsham P."/>
            <person name="Keim P.S."/>
            <person name="Salzberg S.L."/>
            <person name="Fraser-Liggett C.M."/>
            <person name="Rasko D.A."/>
        </authorList>
    </citation>
    <scope>NUCLEOTIDE SEQUENCE [LARGE SCALE GENOMIC DNA]</scope>
    <source>
        <strain>Ames ancestor</strain>
    </source>
</reference>
<reference key="3">
    <citation type="submission" date="2004-01" db="EMBL/GenBank/DDBJ databases">
        <title>Complete genome sequence of Bacillus anthracis Sterne.</title>
        <authorList>
            <person name="Brettin T.S."/>
            <person name="Bruce D."/>
            <person name="Challacombe J.F."/>
            <person name="Gilna P."/>
            <person name="Han C."/>
            <person name="Hill K."/>
            <person name="Hitchcock P."/>
            <person name="Jackson P."/>
            <person name="Keim P."/>
            <person name="Longmire J."/>
            <person name="Lucas S."/>
            <person name="Okinaka R."/>
            <person name="Richardson P."/>
            <person name="Rubin E."/>
            <person name="Tice H."/>
        </authorList>
    </citation>
    <scope>NUCLEOTIDE SEQUENCE [LARGE SCALE GENOMIC DNA]</scope>
    <source>
        <strain>Sterne</strain>
    </source>
</reference>
<feature type="chain" id="PRO_0000159867" description="3-dehydroquinate dehydratase">
    <location>
        <begin position="1"/>
        <end position="146"/>
    </location>
</feature>
<feature type="active site" description="Proton acceptor" evidence="1">
    <location>
        <position position="23"/>
    </location>
</feature>
<feature type="active site" description="Proton donor" evidence="1">
    <location>
        <position position="100"/>
    </location>
</feature>
<feature type="binding site" evidence="1">
    <location>
        <position position="74"/>
    </location>
    <ligand>
        <name>substrate</name>
    </ligand>
</feature>
<feature type="binding site" evidence="1">
    <location>
        <position position="80"/>
    </location>
    <ligand>
        <name>substrate</name>
    </ligand>
</feature>
<feature type="binding site" evidence="1">
    <location>
        <position position="87"/>
    </location>
    <ligand>
        <name>substrate</name>
    </ligand>
</feature>
<feature type="binding site" evidence="1">
    <location>
        <begin position="101"/>
        <end position="102"/>
    </location>
    <ligand>
        <name>substrate</name>
    </ligand>
</feature>
<feature type="binding site" evidence="1">
    <location>
        <position position="111"/>
    </location>
    <ligand>
        <name>substrate</name>
    </ligand>
</feature>
<feature type="site" description="Transition state stabilizer" evidence="1">
    <location>
        <position position="18"/>
    </location>
</feature>
<comment type="function">
    <text evidence="1">Catalyzes a trans-dehydration via an enolate intermediate.</text>
</comment>
<comment type="catalytic activity">
    <reaction evidence="1">
        <text>3-dehydroquinate = 3-dehydroshikimate + H2O</text>
        <dbReference type="Rhea" id="RHEA:21096"/>
        <dbReference type="ChEBI" id="CHEBI:15377"/>
        <dbReference type="ChEBI" id="CHEBI:16630"/>
        <dbReference type="ChEBI" id="CHEBI:32364"/>
        <dbReference type="EC" id="4.2.1.10"/>
    </reaction>
</comment>
<comment type="pathway">
    <text evidence="1">Metabolic intermediate biosynthesis; chorismate biosynthesis; chorismate from D-erythrose 4-phosphate and phosphoenolpyruvate: step 3/7.</text>
</comment>
<comment type="subunit">
    <text evidence="1">Homododecamer.</text>
</comment>
<comment type="similarity">
    <text evidence="1">Belongs to the type-II 3-dehydroquinase family.</text>
</comment>
<name>AROQ_BACAN</name>
<proteinExistence type="inferred from homology"/>